<keyword id="KW-0378">Hydrolase</keyword>
<keyword id="KW-0546">Nucleotide metabolism</keyword>
<keyword id="KW-0547">Nucleotide-binding</keyword>
<keyword id="KW-1185">Reference proteome</keyword>
<protein>
    <recommendedName>
        <fullName evidence="1">dCTP deaminase, dUMP-forming</fullName>
        <ecNumber evidence="1">3.5.4.30</ecNumber>
    </recommendedName>
    <alternativeName>
        <fullName evidence="1">Bifunctional dCTP deaminase:dUTPase</fullName>
    </alternativeName>
    <alternativeName>
        <fullName evidence="1">DCD-DUT</fullName>
    </alternativeName>
</protein>
<gene>
    <name evidence="1" type="primary">dcd</name>
    <name type="ordered locus">PERMA_1644</name>
</gene>
<feature type="chain" id="PRO_1000123155" description="dCTP deaminase, dUMP-forming">
    <location>
        <begin position="1"/>
        <end position="180"/>
    </location>
</feature>
<feature type="active site" description="Proton donor/acceptor" evidence="1">
    <location>
        <position position="127"/>
    </location>
</feature>
<feature type="binding site" evidence="1">
    <location>
        <begin position="100"/>
        <end position="105"/>
    </location>
    <ligand>
        <name>dCTP</name>
        <dbReference type="ChEBI" id="CHEBI:61481"/>
    </ligand>
</feature>
<feature type="binding site" evidence="1">
    <location>
        <position position="117"/>
    </location>
    <ligand>
        <name>dCTP</name>
        <dbReference type="ChEBI" id="CHEBI:61481"/>
    </ligand>
</feature>
<feature type="binding site" evidence="1">
    <location>
        <begin position="125"/>
        <end position="127"/>
    </location>
    <ligand>
        <name>dCTP</name>
        <dbReference type="ChEBI" id="CHEBI:61481"/>
    </ligand>
</feature>
<feature type="binding site" evidence="1">
    <location>
        <position position="146"/>
    </location>
    <ligand>
        <name>dCTP</name>
        <dbReference type="ChEBI" id="CHEBI:61481"/>
    </ligand>
</feature>
<feature type="binding site" evidence="1">
    <location>
        <position position="160"/>
    </location>
    <ligand>
        <name>dCTP</name>
        <dbReference type="ChEBI" id="CHEBI:61481"/>
    </ligand>
</feature>
<feature type="binding site" evidence="1">
    <location>
        <position position="167"/>
    </location>
    <ligand>
        <name>dCTP</name>
        <dbReference type="ChEBI" id="CHEBI:61481"/>
    </ligand>
</feature>
<feature type="site" description="Important for bifunctional activity" evidence="1">
    <location>
        <begin position="114"/>
        <end position="115"/>
    </location>
</feature>
<dbReference type="EC" id="3.5.4.30" evidence="1"/>
<dbReference type="EMBL" id="CP001230">
    <property type="protein sequence ID" value="ACO03860.1"/>
    <property type="molecule type" value="Genomic_DNA"/>
</dbReference>
<dbReference type="RefSeq" id="WP_012676099.1">
    <property type="nucleotide sequence ID" value="NC_012440.1"/>
</dbReference>
<dbReference type="SMR" id="C0QRW3"/>
<dbReference type="STRING" id="123214.PERMA_1644"/>
<dbReference type="PaxDb" id="123214-PERMA_1644"/>
<dbReference type="KEGG" id="pmx:PERMA_1644"/>
<dbReference type="eggNOG" id="COG0717">
    <property type="taxonomic scope" value="Bacteria"/>
</dbReference>
<dbReference type="HOGENOM" id="CLU_087476_2_1_0"/>
<dbReference type="OrthoDB" id="9780202at2"/>
<dbReference type="UniPathway" id="UPA00610">
    <property type="reaction ID" value="UER00667"/>
</dbReference>
<dbReference type="Proteomes" id="UP000001366">
    <property type="component" value="Chromosome"/>
</dbReference>
<dbReference type="GO" id="GO:0033973">
    <property type="term" value="F:dCTP deaminase (dUMP-forming) activity"/>
    <property type="evidence" value="ECO:0007669"/>
    <property type="project" value="UniProtKB-UniRule"/>
</dbReference>
<dbReference type="GO" id="GO:0008829">
    <property type="term" value="F:dCTP deaminase activity"/>
    <property type="evidence" value="ECO:0007669"/>
    <property type="project" value="InterPro"/>
</dbReference>
<dbReference type="GO" id="GO:0000166">
    <property type="term" value="F:nucleotide binding"/>
    <property type="evidence" value="ECO:0007669"/>
    <property type="project" value="UniProtKB-KW"/>
</dbReference>
<dbReference type="GO" id="GO:0006226">
    <property type="term" value="P:dUMP biosynthetic process"/>
    <property type="evidence" value="ECO:0007669"/>
    <property type="project" value="UniProtKB-UniRule"/>
</dbReference>
<dbReference type="GO" id="GO:0006229">
    <property type="term" value="P:dUTP biosynthetic process"/>
    <property type="evidence" value="ECO:0007669"/>
    <property type="project" value="InterPro"/>
</dbReference>
<dbReference type="GO" id="GO:0015949">
    <property type="term" value="P:nucleobase-containing small molecule interconversion"/>
    <property type="evidence" value="ECO:0007669"/>
    <property type="project" value="TreeGrafter"/>
</dbReference>
<dbReference type="CDD" id="cd07557">
    <property type="entry name" value="trimeric_dUTPase"/>
    <property type="match status" value="1"/>
</dbReference>
<dbReference type="Gene3D" id="2.70.40.10">
    <property type="match status" value="1"/>
</dbReference>
<dbReference type="HAMAP" id="MF_00146">
    <property type="entry name" value="dCTP_deaminase"/>
    <property type="match status" value="1"/>
</dbReference>
<dbReference type="InterPro" id="IPR011962">
    <property type="entry name" value="dCTP_deaminase"/>
</dbReference>
<dbReference type="InterPro" id="IPR036157">
    <property type="entry name" value="dUTPase-like_sf"/>
</dbReference>
<dbReference type="InterPro" id="IPR033704">
    <property type="entry name" value="dUTPase_trimeric"/>
</dbReference>
<dbReference type="NCBIfam" id="TIGR02274">
    <property type="entry name" value="dCTP_deam"/>
    <property type="match status" value="1"/>
</dbReference>
<dbReference type="PANTHER" id="PTHR42680">
    <property type="entry name" value="DCTP DEAMINASE"/>
    <property type="match status" value="1"/>
</dbReference>
<dbReference type="PANTHER" id="PTHR42680:SF3">
    <property type="entry name" value="DCTP DEAMINASE"/>
    <property type="match status" value="1"/>
</dbReference>
<dbReference type="Pfam" id="PF22769">
    <property type="entry name" value="DCD"/>
    <property type="match status" value="1"/>
</dbReference>
<dbReference type="SUPFAM" id="SSF51283">
    <property type="entry name" value="dUTPase-like"/>
    <property type="match status" value="1"/>
</dbReference>
<proteinExistence type="inferred from homology"/>
<organism>
    <name type="scientific">Persephonella marina (strain DSM 14350 / EX-H1)</name>
    <dbReference type="NCBI Taxonomy" id="123214"/>
    <lineage>
        <taxon>Bacteria</taxon>
        <taxon>Pseudomonadati</taxon>
        <taxon>Aquificota</taxon>
        <taxon>Aquificia</taxon>
        <taxon>Aquificales</taxon>
        <taxon>Hydrogenothermaceae</taxon>
        <taxon>Persephonella</taxon>
    </lineage>
</organism>
<evidence type="ECO:0000255" key="1">
    <source>
        <dbReference type="HAMAP-Rule" id="MF_00146"/>
    </source>
</evidence>
<accession>C0QRW3</accession>
<sequence>MILNDRKIRELIESKELLIDPLDAVQIQPSSVDLRLGNDFLIYPEDIEILDVRNPDLHNQLKKVVADDEGFIIQPKQFILATTREYIKLPDYLTAFVEGRSSLGRLGLFIENAGWVDAGFEGNITLEFYNANSRPLKIYPGMRICQLVFAKMEEPAENPYRGKYQGQRGTTASRIFLDKD</sequence>
<name>DCDB_PERMH</name>
<reference key="1">
    <citation type="journal article" date="2009" name="J. Bacteriol.">
        <title>Complete and draft genome sequences of six members of the Aquificales.</title>
        <authorList>
            <person name="Reysenbach A.-L."/>
            <person name="Hamamura N."/>
            <person name="Podar M."/>
            <person name="Griffiths E."/>
            <person name="Ferreira S."/>
            <person name="Hochstein R."/>
            <person name="Heidelberg J."/>
            <person name="Johnson J."/>
            <person name="Mead D."/>
            <person name="Pohorille A."/>
            <person name="Sarmiento M."/>
            <person name="Schweighofer K."/>
            <person name="Seshadri R."/>
            <person name="Voytek M.A."/>
        </authorList>
    </citation>
    <scope>NUCLEOTIDE SEQUENCE [LARGE SCALE GENOMIC DNA]</scope>
    <source>
        <strain>DSM 14350 / EX-H1</strain>
    </source>
</reference>
<comment type="function">
    <text evidence="1">Bifunctional enzyme that catalyzes both the deamination of dCTP to dUTP and the hydrolysis of dUTP to dUMP without releasing the toxic dUTP intermediate.</text>
</comment>
<comment type="catalytic activity">
    <reaction evidence="1">
        <text>dCTP + 2 H2O = dUMP + NH4(+) + diphosphate</text>
        <dbReference type="Rhea" id="RHEA:19205"/>
        <dbReference type="ChEBI" id="CHEBI:15377"/>
        <dbReference type="ChEBI" id="CHEBI:28938"/>
        <dbReference type="ChEBI" id="CHEBI:33019"/>
        <dbReference type="ChEBI" id="CHEBI:61481"/>
        <dbReference type="ChEBI" id="CHEBI:246422"/>
        <dbReference type="EC" id="3.5.4.30"/>
    </reaction>
</comment>
<comment type="pathway">
    <text evidence="1">Pyrimidine metabolism; dUMP biosynthesis; dUMP from dCTP: step 1/1.</text>
</comment>
<comment type="subunit">
    <text evidence="1">Homotrimer.</text>
</comment>
<comment type="similarity">
    <text evidence="1">Belongs to the dCTP deaminase family.</text>
</comment>